<feature type="chain" id="PRO_0000218810" description="Phospholipase D beta 1">
    <location>
        <begin position="1"/>
        <end position="1083"/>
    </location>
</feature>
<feature type="domain" description="C2" evidence="2">
    <location>
        <begin position="252"/>
        <end position="393"/>
    </location>
</feature>
<feature type="domain" description="PLD phosphodiesterase 1" evidence="3">
    <location>
        <begin position="595"/>
        <end position="630"/>
    </location>
</feature>
<feature type="domain" description="PLD phosphodiesterase 2" evidence="3">
    <location>
        <begin position="929"/>
        <end position="956"/>
    </location>
</feature>
<feature type="region of interest" description="Disordered" evidence="4">
    <location>
        <begin position="26"/>
        <end position="231"/>
    </location>
</feature>
<feature type="compositionally biased region" description="Pro residues" evidence="4">
    <location>
        <begin position="26"/>
        <end position="38"/>
    </location>
</feature>
<feature type="compositionally biased region" description="Pro residues" evidence="4">
    <location>
        <begin position="46"/>
        <end position="66"/>
    </location>
</feature>
<feature type="compositionally biased region" description="Pro residues" evidence="4">
    <location>
        <begin position="132"/>
        <end position="148"/>
    </location>
</feature>
<feature type="compositionally biased region" description="Polar residues" evidence="4">
    <location>
        <begin position="191"/>
        <end position="213"/>
    </location>
</feature>
<feature type="compositionally biased region" description="Polar residues" evidence="4">
    <location>
        <begin position="222"/>
        <end position="231"/>
    </location>
</feature>
<feature type="active site" evidence="3">
    <location>
        <position position="600"/>
    </location>
</feature>
<feature type="active site" evidence="3">
    <location>
        <position position="602"/>
    </location>
</feature>
<feature type="active site" evidence="3">
    <location>
        <position position="607"/>
    </location>
</feature>
<feature type="active site" evidence="3">
    <location>
        <position position="934"/>
    </location>
</feature>
<feature type="active site" evidence="3">
    <location>
        <position position="936"/>
    </location>
</feature>
<feature type="active site" evidence="3">
    <location>
        <position position="941"/>
    </location>
</feature>
<feature type="binding site" evidence="1">
    <location>
        <position position="455"/>
    </location>
    <ligand>
        <name>Ca(2+)</name>
        <dbReference type="ChEBI" id="CHEBI:29108"/>
    </ligand>
</feature>
<feature type="binding site" evidence="1">
    <location>
        <position position="600"/>
    </location>
    <ligand>
        <name>a 1,2-diacyl-sn-glycero-3-phosphate</name>
        <dbReference type="ChEBI" id="CHEBI:58608"/>
    </ligand>
</feature>
<feature type="binding site" evidence="1">
    <location>
        <position position="636"/>
    </location>
    <ligand>
        <name>Ca(2+)</name>
        <dbReference type="ChEBI" id="CHEBI:29108"/>
    </ligand>
</feature>
<feature type="binding site" evidence="1">
    <location>
        <position position="668"/>
    </location>
    <ligand>
        <name>Ca(2+)</name>
        <dbReference type="ChEBI" id="CHEBI:29108"/>
    </ligand>
</feature>
<feature type="binding site" evidence="1">
    <location>
        <position position="796"/>
    </location>
    <ligand>
        <name>a 1,2-diacyl-sn-glycero-3-phosphate</name>
        <dbReference type="ChEBI" id="CHEBI:58608"/>
    </ligand>
</feature>
<feature type="binding site" evidence="1">
    <location>
        <position position="934"/>
    </location>
    <ligand>
        <name>a 1,2-diacyl-sn-glycero-3-phosphate</name>
        <dbReference type="ChEBI" id="CHEBI:58608"/>
    </ligand>
</feature>
<feature type="binding site" evidence="1">
    <location>
        <position position="997"/>
    </location>
    <ligand>
        <name>Ca(2+)</name>
        <dbReference type="ChEBI" id="CHEBI:29108"/>
    </ligand>
</feature>
<keyword id="KW-0106">Calcium</keyword>
<keyword id="KW-0963">Cytoplasm</keyword>
<keyword id="KW-0378">Hydrolase</keyword>
<keyword id="KW-0442">Lipid degradation</keyword>
<keyword id="KW-0443">Lipid metabolism</keyword>
<keyword id="KW-0472">Membrane</keyword>
<keyword id="KW-0479">Metal-binding</keyword>
<keyword id="KW-1185">Reference proteome</keyword>
<keyword id="KW-0677">Repeat</keyword>
<organism>
    <name type="scientific">Arabidopsis thaliana</name>
    <name type="common">Mouse-ear cress</name>
    <dbReference type="NCBI Taxonomy" id="3702"/>
    <lineage>
        <taxon>Eukaryota</taxon>
        <taxon>Viridiplantae</taxon>
        <taxon>Streptophyta</taxon>
        <taxon>Embryophyta</taxon>
        <taxon>Tracheophyta</taxon>
        <taxon>Spermatophyta</taxon>
        <taxon>Magnoliopsida</taxon>
        <taxon>eudicotyledons</taxon>
        <taxon>Gunneridae</taxon>
        <taxon>Pentapetalae</taxon>
        <taxon>rosids</taxon>
        <taxon>malvids</taxon>
        <taxon>Brassicales</taxon>
        <taxon>Brassicaceae</taxon>
        <taxon>Camelineae</taxon>
        <taxon>Arabidopsis</taxon>
    </lineage>
</organism>
<reference key="1">
    <citation type="journal article" date="1999" name="Nature">
        <title>Sequence and analysis of chromosome 2 of the plant Arabidopsis thaliana.</title>
        <authorList>
            <person name="Lin X."/>
            <person name="Kaul S."/>
            <person name="Rounsley S.D."/>
            <person name="Shea T.P."/>
            <person name="Benito M.-I."/>
            <person name="Town C.D."/>
            <person name="Fujii C.Y."/>
            <person name="Mason T.M."/>
            <person name="Bowman C.L."/>
            <person name="Barnstead M.E."/>
            <person name="Feldblyum T.V."/>
            <person name="Buell C.R."/>
            <person name="Ketchum K.A."/>
            <person name="Lee J.J."/>
            <person name="Ronning C.M."/>
            <person name="Koo H.L."/>
            <person name="Moffat K.S."/>
            <person name="Cronin L.A."/>
            <person name="Shen M."/>
            <person name="Pai G."/>
            <person name="Van Aken S."/>
            <person name="Umayam L."/>
            <person name="Tallon L.J."/>
            <person name="Gill J.E."/>
            <person name="Adams M.D."/>
            <person name="Carrera A.J."/>
            <person name="Creasy T.H."/>
            <person name="Goodman H.M."/>
            <person name="Somerville C.R."/>
            <person name="Copenhaver G.P."/>
            <person name="Preuss D."/>
            <person name="Nierman W.C."/>
            <person name="White O."/>
            <person name="Eisen J.A."/>
            <person name="Salzberg S.L."/>
            <person name="Fraser C.M."/>
            <person name="Venter J.C."/>
        </authorList>
    </citation>
    <scope>NUCLEOTIDE SEQUENCE [LARGE SCALE GENOMIC DNA]</scope>
    <source>
        <strain>cv. Columbia</strain>
    </source>
</reference>
<reference key="2">
    <citation type="journal article" date="2017" name="Plant J.">
        <title>Araport11: a complete reannotation of the Arabidopsis thaliana reference genome.</title>
        <authorList>
            <person name="Cheng C.Y."/>
            <person name="Krishnakumar V."/>
            <person name="Chan A.P."/>
            <person name="Thibaud-Nissen F."/>
            <person name="Schobel S."/>
            <person name="Town C.D."/>
        </authorList>
    </citation>
    <scope>GENOME REANNOTATION</scope>
    <source>
        <strain>cv. Columbia</strain>
    </source>
</reference>
<reference key="3">
    <citation type="journal article" date="1997" name="J. Biol. Chem.">
        <title>Molecular cloning and functional analysis of polyphosphoinositide-dependent phospholipase D, PLDbeta, from Arabidopsis.</title>
        <authorList>
            <person name="Pappan K."/>
            <person name="Qin W."/>
            <person name="Dyer J.H."/>
            <person name="Zheng L."/>
            <person name="Wang X."/>
        </authorList>
    </citation>
    <scope>NUCLEOTIDE SEQUENCE [MRNA] OF 60-1083</scope>
    <scope>CATALYTIC ACTIVITY</scope>
    <source>
        <strain>cv. Columbia</strain>
        <tissue>Hypocotyl</tissue>
    </source>
</reference>
<reference key="4">
    <citation type="submission" date="2001-08" db="EMBL/GenBank/DDBJ databases">
        <authorList>
            <person name="Wang X."/>
        </authorList>
    </citation>
    <scope>SEQUENCE REVISION</scope>
</reference>
<reference key="5">
    <citation type="journal article" date="1997" name="J. Biol. Chem.">
        <title>Molecular heterogeneity of phospholipase D (PLD). Cloning of PLDgamma and regulation of plant PLDgamma, -beta, and -alpha by polyphosphoinositides and calcium.</title>
        <authorList>
            <person name="Qin W."/>
            <person name="Pappan K."/>
            <person name="Wang X."/>
        </authorList>
    </citation>
    <scope>CATALYTIC ACTIVITY</scope>
    <scope>COFACTOR</scope>
    <scope>ACTIVITY REGULATION</scope>
</reference>
<reference key="6">
    <citation type="journal article" date="1998" name="Arch. Biochem. Biophys.">
        <title>Substrate selectivities and lipid modulation of plant phospholipase D alpha, -beta, and -gamma.</title>
        <authorList>
            <person name="Pappan K."/>
            <person name="Austin-Brown S."/>
            <person name="Chapman K.D."/>
            <person name="Wang X."/>
        </authorList>
    </citation>
    <scope>SUBSTRATE SPECIFICITY</scope>
</reference>
<reference key="7">
    <citation type="journal article" date="1999" name="Arch. Biochem. Biophys.">
        <title>Plant phospholipase Dalpha is an acidic phospholipase active at near-physiological Ca(2+) concentrations.</title>
        <authorList>
            <person name="Pappan K."/>
            <person name="Wang X."/>
        </authorList>
    </citation>
    <scope>CATALYTIC ACTIVITY</scope>
    <scope>BIOPHYSICOCHEMICAL PROPERTIES</scope>
</reference>
<reference key="8">
    <citation type="journal article" date="1999" name="Plant Physiol.">
        <title>Subcellular distribution and tissue expression of phospholipase Dalpha, Dbeta, and Dgamma in Arabidopsis.</title>
        <authorList>
            <person name="Fan L."/>
            <person name="Zheng S."/>
            <person name="Cui D."/>
            <person name="Wang X."/>
        </authorList>
    </citation>
    <scope>TISSUE SPECIFICITY</scope>
</reference>
<reference key="9">
    <citation type="journal article" date="2000" name="J. Biol. Chem.">
        <title>Distinct Ca2+ binding properties of novel C2 domains of plant phospholipase dalpha and beta.</title>
        <authorList>
            <person name="Zheng L."/>
            <person name="Krishnamoorthi R."/>
            <person name="Zolkiewski M."/>
            <person name="Wang X."/>
        </authorList>
    </citation>
    <scope>DOMAIN</scope>
    <scope>3D-STRUCTURE MODELING</scope>
</reference>
<reference key="10">
    <citation type="journal article" date="2000" name="Plant Cell">
        <title>Involvement of phospholipase D in wound-induced accumulation of jasmonic acid in arabidopsis.</title>
        <authorList>
            <person name="Wang C."/>
            <person name="Zien C.A."/>
            <person name="Afitlhile M."/>
            <person name="Welti R."/>
            <person name="Hildebrand D.F."/>
            <person name="Wang X."/>
        </authorList>
    </citation>
    <scope>INDUCTION BY WOUNDING</scope>
</reference>
<reference key="11">
    <citation type="journal article" date="2001" name="Plant J.">
        <title>Regulation of plant water loss by manipulating the expression of phospholipase Dalpha.</title>
        <authorList>
            <person name="Sang Y."/>
            <person name="Zheng S."/>
            <person name="Li W."/>
            <person name="Huang B."/>
            <person name="Wang X."/>
        </authorList>
    </citation>
    <scope>FUNCTION</scope>
</reference>
<reference key="12">
    <citation type="journal article" date="2002" name="Plant Physiol.">
        <title>The Arabidopsis phospholipase D family. Characterization of a calcium-independent and phosphatidylcholine-selective PLD zeta 1 with distinct regulatory domains.</title>
        <authorList>
            <person name="Qin C."/>
            <person name="Wang X."/>
        </authorList>
    </citation>
    <scope>GENE FAMILY</scope>
    <scope>NOMENCLATURE</scope>
</reference>
<reference key="13">
    <citation type="journal article" date="2013" name="New Phytol.">
        <title>Arabidopsis phospholipase Dbeta1 modulates defense responses to bacterial and fungal pathogens.</title>
        <authorList>
            <person name="Zhao J."/>
            <person name="Devaiah S.P."/>
            <person name="Wang C."/>
            <person name="Li M."/>
            <person name="Welti R."/>
            <person name="Wang X."/>
        </authorList>
    </citation>
    <scope>FUNCTION</scope>
</reference>
<proteinExistence type="evidence at protein level"/>
<comment type="function">
    <text evidence="9 10 13">Hydrolyzes glycerol-phospholipids at the terminal phosphodiesteric bond to generate phosphatidic acids (PA). Plays an important role in various cellular processes, including phytohormone action, vesicular trafficking, secretion, cytoskeletal arrangement, meiosis, tumor promotion, pathogenesis, membrane deterioration and senescence. Involved in regulating stomatal movement and plant-water status (PubMed:11722757). Can use phosphatidylserine (PS) and phosphatidylethanolamine (PE) as substrates only in the presence of PIP2. Can use phosphatidylcholine (PC), phosphatidylglycerol (PG) or N-acylphosphatidylethanolamine (NAPE) as substrates in the presence of PE and PIP2 (PubMed:9578608). Modulates defense responses to bacterial and fungal pathogens (PubMed:23577648).</text>
</comment>
<comment type="catalytic activity">
    <reaction evidence="6 11 12">
        <text>a 1,2-diacyl-sn-glycero-3-phosphocholine + H2O = a 1,2-diacyl-sn-glycero-3-phosphate + choline + H(+)</text>
        <dbReference type="Rhea" id="RHEA:14445"/>
        <dbReference type="ChEBI" id="CHEBI:15354"/>
        <dbReference type="ChEBI" id="CHEBI:15377"/>
        <dbReference type="ChEBI" id="CHEBI:15378"/>
        <dbReference type="ChEBI" id="CHEBI:57643"/>
        <dbReference type="ChEBI" id="CHEBI:58608"/>
        <dbReference type="EC" id="3.1.4.4"/>
    </reaction>
</comment>
<comment type="cofactor">
    <cofactor evidence="11 12">
        <name>Ca(2+)</name>
        <dbReference type="ChEBI" id="CHEBI:29108"/>
    </cofactor>
    <text evidence="11 12">Ca(2+). Requires micromolar level (PIP2-dependent).</text>
</comment>
<comment type="activity regulation">
    <text evidence="11 12">Inhibited by neomycin. Up-regulated by PIP2 binding.</text>
</comment>
<comment type="biophysicochemical properties">
    <phDependence>
        <text evidence="6">Optimum pH is 6.5 to 7.5.</text>
    </phDependence>
</comment>
<comment type="subcellular location">
    <subcellularLocation>
        <location evidence="1">Cytoplasm</location>
    </subcellularLocation>
    <subcellularLocation>
        <location evidence="1">Membrane</location>
        <topology evidence="1">Peripheral membrane protein</topology>
    </subcellularLocation>
</comment>
<comment type="tissue specificity">
    <text evidence="5">Expressed in stems, and to a lower amount in leaves, flowers and siliques.</text>
</comment>
<comment type="induction">
    <text evidence="8">Activated by wounding, methyl jasmonate, heavy metal, osmotic and salt stresses.</text>
</comment>
<comment type="domain">
    <text evidence="7">C2 domain is a calcium-binding fold, and the binding induces conformational changes, promoting the protein association with membranes. These conformational changes occure at micromolar Ca(2+) concentrations. Exhibits three Ca(2+)-binding sites. Also binds PIP2.</text>
</comment>
<comment type="similarity">
    <text evidence="16">Belongs to the phospholipase D family. C2-PLD subfamily.</text>
</comment>
<comment type="sequence caution" evidence="16">
    <conflict type="erroneous initiation">
        <sequence resource="EMBL-CDS" id="AAB63542"/>
    </conflict>
    <text>Truncated N-terminus.</text>
</comment>
<comment type="sequence caution" evidence="16">
    <conflict type="miscellaneous discrepancy">
        <sequence resource="EMBL-CDS" id="AAC49656"/>
    </conflict>
    <text>Sequencing errors.</text>
</comment>
<dbReference type="EC" id="3.1.4.4" evidence="6 11 12"/>
<dbReference type="EMBL" id="U90439">
    <property type="protein sequence ID" value="AAB63542.2"/>
    <property type="status" value="ALT_INIT"/>
    <property type="molecule type" value="Genomic_DNA"/>
</dbReference>
<dbReference type="EMBL" id="CP002685">
    <property type="protein sequence ID" value="AEC10063.1"/>
    <property type="molecule type" value="Genomic_DNA"/>
</dbReference>
<dbReference type="EMBL" id="U84568">
    <property type="protein sequence ID" value="AAC49656.2"/>
    <property type="status" value="ALT_SEQ"/>
    <property type="molecule type" value="mRNA"/>
</dbReference>
<dbReference type="PIR" id="H84848">
    <property type="entry name" value="H84848"/>
</dbReference>
<dbReference type="RefSeq" id="NP_565963.2">
    <property type="nucleotide sequence ID" value="NM_129765.4"/>
</dbReference>
<dbReference type="SMR" id="P93733"/>
<dbReference type="BioGRID" id="4139">
    <property type="interactions" value="3"/>
</dbReference>
<dbReference type="FunCoup" id="P93733">
    <property type="interactions" value="616"/>
</dbReference>
<dbReference type="IntAct" id="P93733">
    <property type="interactions" value="2"/>
</dbReference>
<dbReference type="STRING" id="3702.P93733"/>
<dbReference type="GlyGen" id="P93733">
    <property type="glycosylation" value="1 site"/>
</dbReference>
<dbReference type="iPTMnet" id="P93733"/>
<dbReference type="PaxDb" id="3702-AT2G42010.1"/>
<dbReference type="ProteomicsDB" id="235007"/>
<dbReference type="EnsemblPlants" id="AT2G42010.1">
    <property type="protein sequence ID" value="AT2G42010.1"/>
    <property type="gene ID" value="AT2G42010"/>
</dbReference>
<dbReference type="GeneID" id="818802"/>
<dbReference type="Gramene" id="AT2G42010.1">
    <property type="protein sequence ID" value="AT2G42010.1"/>
    <property type="gene ID" value="AT2G42010"/>
</dbReference>
<dbReference type="KEGG" id="ath:AT2G42010"/>
<dbReference type="Araport" id="AT2G42010"/>
<dbReference type="TAIR" id="AT2G42010">
    <property type="gene designation" value="PLDBETA1"/>
</dbReference>
<dbReference type="eggNOG" id="KOG1329">
    <property type="taxonomic scope" value="Eukaryota"/>
</dbReference>
<dbReference type="HOGENOM" id="CLU_004684_0_1_1"/>
<dbReference type="InParanoid" id="P93733"/>
<dbReference type="BioCyc" id="ARA:AT2G42010-MONOMER"/>
<dbReference type="BioCyc" id="MetaCyc:AT2G42010-MONOMER"/>
<dbReference type="BRENDA" id="3.1.4.4">
    <property type="organism ID" value="399"/>
</dbReference>
<dbReference type="PRO" id="PR:P93733"/>
<dbReference type="Proteomes" id="UP000006548">
    <property type="component" value="Chromosome 2"/>
</dbReference>
<dbReference type="ExpressionAtlas" id="P93733">
    <property type="expression patterns" value="baseline and differential"/>
</dbReference>
<dbReference type="GO" id="GO:0005737">
    <property type="term" value="C:cytoplasm"/>
    <property type="evidence" value="ECO:0007669"/>
    <property type="project" value="UniProtKB-SubCell"/>
</dbReference>
<dbReference type="GO" id="GO:0016020">
    <property type="term" value="C:membrane"/>
    <property type="evidence" value="ECO:0007669"/>
    <property type="project" value="UniProtKB-SubCell"/>
</dbReference>
<dbReference type="GO" id="GO:0009506">
    <property type="term" value="C:plasmodesma"/>
    <property type="evidence" value="ECO:0007005"/>
    <property type="project" value="TAIR"/>
</dbReference>
<dbReference type="GO" id="GO:0046872">
    <property type="term" value="F:metal ion binding"/>
    <property type="evidence" value="ECO:0007669"/>
    <property type="project" value="UniProtKB-KW"/>
</dbReference>
<dbReference type="GO" id="GO:0005546">
    <property type="term" value="F:phosphatidylinositol-4,5-bisphosphate binding"/>
    <property type="evidence" value="ECO:0000314"/>
    <property type="project" value="TAIR"/>
</dbReference>
<dbReference type="GO" id="GO:0004630">
    <property type="term" value="F:phospholipase D activity"/>
    <property type="evidence" value="ECO:0000314"/>
    <property type="project" value="TAIR"/>
</dbReference>
<dbReference type="GO" id="GO:0042742">
    <property type="term" value="P:defense response to bacterium"/>
    <property type="evidence" value="ECO:0000270"/>
    <property type="project" value="TAIR"/>
</dbReference>
<dbReference type="GO" id="GO:0016042">
    <property type="term" value="P:lipid catabolic process"/>
    <property type="evidence" value="ECO:0007669"/>
    <property type="project" value="UniProtKB-KW"/>
</dbReference>
<dbReference type="CDD" id="cd04015">
    <property type="entry name" value="C2_plant_PLD"/>
    <property type="match status" value="1"/>
</dbReference>
<dbReference type="FunFam" id="3.30.870.10:FF:000027">
    <property type="entry name" value="Phospholipase D"/>
    <property type="match status" value="1"/>
</dbReference>
<dbReference type="FunFam" id="2.60.40.150:FF:000193">
    <property type="entry name" value="Phospholipase D delta"/>
    <property type="match status" value="1"/>
</dbReference>
<dbReference type="FunFam" id="3.30.870.10:FF:000025">
    <property type="entry name" value="Phospholipase D delta"/>
    <property type="match status" value="1"/>
</dbReference>
<dbReference type="Gene3D" id="2.60.40.150">
    <property type="entry name" value="C2 domain"/>
    <property type="match status" value="1"/>
</dbReference>
<dbReference type="Gene3D" id="3.30.870.10">
    <property type="entry name" value="Endonuclease Chain A"/>
    <property type="match status" value="2"/>
</dbReference>
<dbReference type="InterPro" id="IPR000008">
    <property type="entry name" value="C2_dom"/>
</dbReference>
<dbReference type="InterPro" id="IPR035892">
    <property type="entry name" value="C2_domain_sf"/>
</dbReference>
<dbReference type="InterPro" id="IPR001736">
    <property type="entry name" value="PLipase_D/transphosphatidylase"/>
</dbReference>
<dbReference type="InterPro" id="IPR024632">
    <property type="entry name" value="PLipase_D_C"/>
</dbReference>
<dbReference type="InterPro" id="IPR015679">
    <property type="entry name" value="PLipase_D_fam"/>
</dbReference>
<dbReference type="PANTHER" id="PTHR18896">
    <property type="entry name" value="PHOSPHOLIPASE D"/>
    <property type="match status" value="1"/>
</dbReference>
<dbReference type="PANTHER" id="PTHR18896:SF65">
    <property type="entry name" value="PHOSPHOLIPASE D BETA 1"/>
    <property type="match status" value="1"/>
</dbReference>
<dbReference type="Pfam" id="PF00168">
    <property type="entry name" value="C2"/>
    <property type="match status" value="1"/>
</dbReference>
<dbReference type="Pfam" id="PF12357">
    <property type="entry name" value="PLD_C"/>
    <property type="match status" value="1"/>
</dbReference>
<dbReference type="Pfam" id="PF00614">
    <property type="entry name" value="PLDc"/>
    <property type="match status" value="2"/>
</dbReference>
<dbReference type="SMART" id="SM00239">
    <property type="entry name" value="C2"/>
    <property type="match status" value="1"/>
</dbReference>
<dbReference type="SMART" id="SM00155">
    <property type="entry name" value="PLDc"/>
    <property type="match status" value="2"/>
</dbReference>
<dbReference type="SUPFAM" id="SSF49562">
    <property type="entry name" value="C2 domain (Calcium/lipid-binding domain, CaLB)"/>
    <property type="match status" value="1"/>
</dbReference>
<dbReference type="SUPFAM" id="SSF56024">
    <property type="entry name" value="Phospholipase D/nuclease"/>
    <property type="match status" value="2"/>
</dbReference>
<dbReference type="PROSITE" id="PS50004">
    <property type="entry name" value="C2"/>
    <property type="match status" value="1"/>
</dbReference>
<dbReference type="PROSITE" id="PS50035">
    <property type="entry name" value="PLD"/>
    <property type="match status" value="2"/>
</dbReference>
<accession>P93733</accession>
<accession>F4ILZ0</accession>
<accession>P93745</accession>
<evidence type="ECO:0000250" key="1">
    <source>
        <dbReference type="UniProtKB" id="Q38882"/>
    </source>
</evidence>
<evidence type="ECO:0000255" key="2">
    <source>
        <dbReference type="PROSITE-ProRule" id="PRU00041"/>
    </source>
</evidence>
<evidence type="ECO:0000255" key="3">
    <source>
        <dbReference type="PROSITE-ProRule" id="PRU00153"/>
    </source>
</evidence>
<evidence type="ECO:0000256" key="4">
    <source>
        <dbReference type="SAM" id="MobiDB-lite"/>
    </source>
</evidence>
<evidence type="ECO:0000269" key="5">
    <source>
    </source>
</evidence>
<evidence type="ECO:0000269" key="6">
    <source>
    </source>
</evidence>
<evidence type="ECO:0000269" key="7">
    <source>
    </source>
</evidence>
<evidence type="ECO:0000269" key="8">
    <source>
    </source>
</evidence>
<evidence type="ECO:0000269" key="9">
    <source>
    </source>
</evidence>
<evidence type="ECO:0000269" key="10">
    <source>
    </source>
</evidence>
<evidence type="ECO:0000269" key="11">
    <source>
    </source>
</evidence>
<evidence type="ECO:0000269" key="12">
    <source>
    </source>
</evidence>
<evidence type="ECO:0000269" key="13">
    <source>
    </source>
</evidence>
<evidence type="ECO:0000303" key="14">
    <source>
    </source>
</evidence>
<evidence type="ECO:0000303" key="15">
    <source>
    </source>
</evidence>
<evidence type="ECO:0000305" key="16"/>
<evidence type="ECO:0000312" key="17">
    <source>
        <dbReference type="Araport" id="AT2G42010"/>
    </source>
</evidence>
<evidence type="ECO:0000312" key="18">
    <source>
        <dbReference type="EMBL" id="AAB63542.2"/>
    </source>
</evidence>
<sequence>MDNHGPRYPYPYGQYPYPYPYPAPYRPPSSEPYPPPPTNQYSAPYYPYPPPPYATPPPYASPPPPHQHTSGSHSGPLDYSHNPQPSSLAAAPPEYHRHSFDYQPSPYPYQPQGNFGAYGPPPPHYSYQEPAQYPPPETKPQEPLPPPQQTQGFQEYRRQDCLSTGGTGHDNVSNSGSSYPPVDELLGGLHISTNQPGPSVPQLSSLPSNSWQSRPGDLYGYPNSSFPSNSHLPQLGRVDSSSSYYASTESPHSADMQMTLFGKGSLKVLLLHGNLDIWIYHAKNLPNMDMFHKTLGDMFGRLPGKIEGQLTSKITSDPYVSVSVAGAVIGRTYVMSNSENPVWMQHFYVPVAHHAAEVHFVVKDSDVVGSQLIGLVTIPVEQIYSGAKIEGTYPILNSNGKPCKPGANLSLSIQYTPMDKLSVYHHGVGAGPDYQGVPGTYFPLRKGGTVRLYQDAHVPEGMLPGIRLDNGMSYEHGKCWHDMFDAIRQARRLIYITGWSVWHKVKLIRDKLGPASECTLGELLRSKSQEGVRVLLLIWDDPTSRSILGYKTDGVMATHDEETRRFFKHSSVQVLLCPRNAGKRHSWVKQREVGTIYTHHQKNVIVDADAGGNRRKIIAFVGGLDLCDGRYDTPQHPLFRTLQTIHKDDFHNPTFTGNLSGCPREPWHDLHSKIDGPAAYDVLTNFEERWLKAAKPSGIKKFKTSYDDALLRIDRIPDILGVSDTPTVSENDPEAWHVQIFRSIDSNSVKGFPKDPKDATCKNLVCGKNVLIDMSIHTAYVKAIRAAQHFIYIENQYFIGSSYNWNAHKDIGANNLIPMEIALKIAEKIRANERFAAYIVIPMWPEGVPTGAATQRILYWQHKTIQMMYETIYKALVETGLEGAFSPQDYLNFFCLGNREMVDGIDNSGTGSPSNANTPQALSRKSRRFMVYVHSKGMVVDDEYVVIGSANINQRSMEGTRDTEIAMGAYQPQHTWARKHSGPRGQIYGYRMSLWAEHMATLDDCFTQPESIECVRKVRTMGERNWKQFAAEEVSDMRGHLLKYPVEVDRKGKVRPLPGSETFPDVGGNIVGSFIAIQENLTI</sequence>
<gene>
    <name evidence="14" type="primary">PLDBETA1</name>
    <name evidence="17" type="ordered locus">At2g42010</name>
    <name evidence="18" type="ORF">T6D20.10</name>
</gene>
<name>PLDB1_ARATH</name>
<protein>
    <recommendedName>
        <fullName evidence="14">Phospholipase D beta 1</fullName>
        <shortName evidence="14">AtPLDbeta1</shortName>
        <shortName evidence="14">PLD beta 1</shortName>
        <shortName evidence="15">PLDbeta</shortName>
        <ecNumber evidence="6 11 12">3.1.4.4</ecNumber>
    </recommendedName>
</protein>